<reference key="1">
    <citation type="journal article" date="1996" name="J. Bacteriol.">
        <title>2,4-Dinitrotoluene dioxygenase from Burkholderia sp. strain DNT: similarity to naphthalene dioxygenase.</title>
        <authorList>
            <person name="Suen W.C."/>
            <person name="Haigler B.E."/>
            <person name="Spain J.C."/>
        </authorList>
    </citation>
    <scope>NUCLEOTIDE SEQUENCE [GENOMIC DNA]</scope>
    <scope>FUNCTION</scope>
    <scope>SUBSTRATE SPECIFICITY</scope>
    <scope>SUBUNIT</scope>
    <source>
        <strain evidence="8">DNT</strain>
    </source>
</reference>
<organism>
    <name type="scientific">Burkholderia sp. (strain RASC)</name>
    <dbReference type="NCBI Taxonomy" id="69003"/>
    <lineage>
        <taxon>Bacteria</taxon>
        <taxon>Pseudomonadati</taxon>
        <taxon>Pseudomonadota</taxon>
        <taxon>Betaproteobacteria</taxon>
        <taxon>Burkholderiales</taxon>
        <taxon>Burkholderiaceae</taxon>
        <taxon>Burkholderia</taxon>
    </lineage>
</organism>
<comment type="function">
    <text evidence="4">Component of the 2,4-dinitrotoluene dioxygenase (DNTDO) multicomponent enzyme system which catalyzes the incorporation of both atoms of molecular oxygen into 2,4-dinitrotoluene (DNT) to form 4-methyl-5-nitrocatechol (MNC) and nitrite. Functions as an intermediate electron transfer protein via a specific interaction with iron sulfur protein components (ISP)(DntAc and DntAd). Also able to convert naphthalene to cis-(1R,2S)-dihydroxy-1,2-dihydronaphthalene.</text>
</comment>
<comment type="cofactor">
    <cofactor evidence="1 2">
        <name>[2Fe-2S] cluster</name>
        <dbReference type="ChEBI" id="CHEBI:190135"/>
    </cofactor>
    <text evidence="1 2">Binds 1 [2Fe-2S] cluster per subunit.</text>
</comment>
<comment type="subunit">
    <text evidence="7">The 2,4-dinitrotoluene dioxygenase (DNTDO) multicomponent enzyme system is composed of an electron transfer component and a dioxygenase component (iron sulfur protein (ISP)). The electron transfer component is composed of a ferredoxin reductase (DntAa) and a ferredoxin (DntAb), and the dioxygenase component is formed of a large alpha subunit (DntAc) and a small beta subunit (DntAd).</text>
</comment>
<comment type="similarity">
    <text evidence="6">Belongs to the bacterial ring-hydroxylating dioxygenase ferredoxin component family.</text>
</comment>
<accession>Q45694</accession>
<keyword id="KW-0001">2Fe-2S</keyword>
<keyword id="KW-0058">Aromatic hydrocarbons catabolism</keyword>
<keyword id="KW-0249">Electron transport</keyword>
<keyword id="KW-0408">Iron</keyword>
<keyword id="KW-0411">Iron-sulfur</keyword>
<keyword id="KW-0479">Metal-binding</keyword>
<keyword id="KW-0813">Transport</keyword>
<name>DNTAB_BURSR</name>
<feature type="chain" id="PRO_0000442191" description="2,4-dinitrotoluene dioxygenase system, ferredoxin component">
    <location>
        <begin position="1"/>
        <end position="104"/>
    </location>
</feature>
<feature type="domain" description="Rieske" evidence="2">
    <location>
        <begin position="5"/>
        <end position="101"/>
    </location>
</feature>
<feature type="region of interest" description="Disordered" evidence="3">
    <location>
        <begin position="1"/>
        <end position="21"/>
    </location>
</feature>
<feature type="binding site" evidence="1 2">
    <location>
        <position position="45"/>
    </location>
    <ligand>
        <name>[2Fe-2S] cluster</name>
        <dbReference type="ChEBI" id="CHEBI:190135"/>
    </ligand>
</feature>
<feature type="binding site" evidence="1 2">
    <location>
        <position position="47"/>
    </location>
    <ligand>
        <name>[2Fe-2S] cluster</name>
        <dbReference type="ChEBI" id="CHEBI:190135"/>
    </ligand>
</feature>
<feature type="binding site" evidence="1 2">
    <location>
        <position position="64"/>
    </location>
    <ligand>
        <name>[2Fe-2S] cluster</name>
        <dbReference type="ChEBI" id="CHEBI:190135"/>
    </ligand>
</feature>
<feature type="binding site" evidence="1 2">
    <location>
        <position position="67"/>
    </location>
    <ligand>
        <name>[2Fe-2S] cluster</name>
        <dbReference type="ChEBI" id="CHEBI:190135"/>
    </ligand>
</feature>
<gene>
    <name evidence="5" type="primary">dntAb</name>
</gene>
<protein>
    <recommendedName>
        <fullName evidence="5">2,4-dinitrotoluene dioxygenase system, ferredoxin component</fullName>
    </recommendedName>
</protein>
<evidence type="ECO:0000250" key="1">
    <source>
        <dbReference type="UniProtKB" id="P0A185"/>
    </source>
</evidence>
<evidence type="ECO:0000255" key="2">
    <source>
        <dbReference type="PROSITE-ProRule" id="PRU00628"/>
    </source>
</evidence>
<evidence type="ECO:0000256" key="3">
    <source>
        <dbReference type="SAM" id="MobiDB-lite"/>
    </source>
</evidence>
<evidence type="ECO:0000269" key="4">
    <source>
    </source>
</evidence>
<evidence type="ECO:0000303" key="5">
    <source>
    </source>
</evidence>
<evidence type="ECO:0000305" key="6"/>
<evidence type="ECO:0000305" key="7">
    <source>
    </source>
</evidence>
<evidence type="ECO:0000312" key="8">
    <source>
        <dbReference type="EMBL" id="AAB09765.1"/>
    </source>
</evidence>
<sequence>MSENWIDAAARDEVPRGRRDRHQYRRQGDCLYEVAGEIYATDNTCTHGAARMSDGFLEGREIECPLHQGRFDVCTGKALCTPLTQDIKTYPVKIENMRVMLKLD</sequence>
<proteinExistence type="evidence at protein level"/>
<dbReference type="EMBL" id="U62430">
    <property type="protein sequence ID" value="AAB09765.1"/>
    <property type="molecule type" value="Genomic_DNA"/>
</dbReference>
<dbReference type="SMR" id="Q45694"/>
<dbReference type="KEGG" id="ag:AAB09765"/>
<dbReference type="GO" id="GO:0051537">
    <property type="term" value="F:2 iron, 2 sulfur cluster binding"/>
    <property type="evidence" value="ECO:0000250"/>
    <property type="project" value="UniProtKB"/>
</dbReference>
<dbReference type="GO" id="GO:0046872">
    <property type="term" value="F:metal ion binding"/>
    <property type="evidence" value="ECO:0007669"/>
    <property type="project" value="UniProtKB-KW"/>
</dbReference>
<dbReference type="GO" id="GO:0009056">
    <property type="term" value="P:catabolic process"/>
    <property type="evidence" value="ECO:0007669"/>
    <property type="project" value="UniProtKB-KW"/>
</dbReference>
<dbReference type="CDD" id="cd03528">
    <property type="entry name" value="Rieske_RO_ferredoxin"/>
    <property type="match status" value="1"/>
</dbReference>
<dbReference type="FunFam" id="2.102.10.10:FF:000015">
    <property type="entry name" value="Naphthalene 1,2-dioxygenase ferredoxin component"/>
    <property type="match status" value="1"/>
</dbReference>
<dbReference type="Gene3D" id="2.102.10.10">
    <property type="entry name" value="Rieske [2Fe-2S] iron-sulphur domain"/>
    <property type="match status" value="1"/>
</dbReference>
<dbReference type="InterPro" id="IPR017941">
    <property type="entry name" value="Rieske_2Fe-2S"/>
</dbReference>
<dbReference type="InterPro" id="IPR036922">
    <property type="entry name" value="Rieske_2Fe-2S_sf"/>
</dbReference>
<dbReference type="PANTHER" id="PTHR21496">
    <property type="entry name" value="FERREDOXIN-RELATED"/>
    <property type="match status" value="1"/>
</dbReference>
<dbReference type="PANTHER" id="PTHR21496:SF0">
    <property type="entry name" value="RIESKE DOMAIN-CONTAINING PROTEIN"/>
    <property type="match status" value="1"/>
</dbReference>
<dbReference type="Pfam" id="PF00355">
    <property type="entry name" value="Rieske"/>
    <property type="match status" value="1"/>
</dbReference>
<dbReference type="SUPFAM" id="SSF50022">
    <property type="entry name" value="ISP domain"/>
    <property type="match status" value="1"/>
</dbReference>
<dbReference type="PROSITE" id="PS51296">
    <property type="entry name" value="RIESKE"/>
    <property type="match status" value="1"/>
</dbReference>